<protein>
    <recommendedName>
        <fullName evidence="1">Protein FdhE homolog</fullName>
    </recommendedName>
</protein>
<name>FDHE_HAEIE</name>
<keyword id="KW-0963">Cytoplasm</keyword>
<comment type="function">
    <text evidence="1">Necessary for formate dehydrogenase activity.</text>
</comment>
<comment type="subcellular location">
    <subcellularLocation>
        <location evidence="1">Cytoplasm</location>
    </subcellularLocation>
</comment>
<comment type="similarity">
    <text evidence="1">Belongs to the FdhE family.</text>
</comment>
<reference key="1">
    <citation type="journal article" date="2007" name="Genome Biol.">
        <title>Characterization and modeling of the Haemophilus influenzae core and supragenomes based on the complete genomic sequences of Rd and 12 clinical nontypeable strains.</title>
        <authorList>
            <person name="Hogg J.S."/>
            <person name="Hu F.Z."/>
            <person name="Janto B."/>
            <person name="Boissy R."/>
            <person name="Hayes J."/>
            <person name="Keefe R."/>
            <person name="Post J.C."/>
            <person name="Ehrlich G.D."/>
        </authorList>
    </citation>
    <scope>NUCLEOTIDE SEQUENCE [LARGE SCALE GENOMIC DNA]</scope>
    <source>
        <strain>PittEE</strain>
    </source>
</reference>
<dbReference type="EMBL" id="CP000671">
    <property type="protein sequence ID" value="ABQ98079.1"/>
    <property type="molecule type" value="Genomic_DNA"/>
</dbReference>
<dbReference type="SMR" id="A5UBC8"/>
<dbReference type="KEGG" id="hip:CGSHiEE_03270"/>
<dbReference type="HOGENOM" id="CLU_055275_0_0_6"/>
<dbReference type="GO" id="GO:0005829">
    <property type="term" value="C:cytosol"/>
    <property type="evidence" value="ECO:0007669"/>
    <property type="project" value="TreeGrafter"/>
</dbReference>
<dbReference type="GO" id="GO:0008199">
    <property type="term" value="F:ferric iron binding"/>
    <property type="evidence" value="ECO:0007669"/>
    <property type="project" value="TreeGrafter"/>
</dbReference>
<dbReference type="GO" id="GO:0051604">
    <property type="term" value="P:protein maturation"/>
    <property type="evidence" value="ECO:0007669"/>
    <property type="project" value="TreeGrafter"/>
</dbReference>
<dbReference type="CDD" id="cd16341">
    <property type="entry name" value="FdhE"/>
    <property type="match status" value="1"/>
</dbReference>
<dbReference type="FunFam" id="3.90.1670.10:FF:000001">
    <property type="entry name" value="Protein FdhE"/>
    <property type="match status" value="1"/>
</dbReference>
<dbReference type="Gene3D" id="3.90.1670.10">
    <property type="entry name" value="FdhE-like domain"/>
    <property type="match status" value="1"/>
</dbReference>
<dbReference type="HAMAP" id="MF_00611">
    <property type="entry name" value="FdeH"/>
    <property type="match status" value="1"/>
</dbReference>
<dbReference type="InterPro" id="IPR024064">
    <property type="entry name" value="FdhE-like_sf"/>
</dbReference>
<dbReference type="InterPro" id="IPR056796">
    <property type="entry name" value="FdhE_C"/>
</dbReference>
<dbReference type="InterPro" id="IPR056797">
    <property type="entry name" value="FdhE_central"/>
</dbReference>
<dbReference type="InterPro" id="IPR056774">
    <property type="entry name" value="FdhE_N"/>
</dbReference>
<dbReference type="InterPro" id="IPR006452">
    <property type="entry name" value="Formate_DH_accessory"/>
</dbReference>
<dbReference type="NCBIfam" id="TIGR01562">
    <property type="entry name" value="FdhE"/>
    <property type="match status" value="1"/>
</dbReference>
<dbReference type="NCBIfam" id="NF002925">
    <property type="entry name" value="PRK03564.1"/>
    <property type="match status" value="1"/>
</dbReference>
<dbReference type="PANTHER" id="PTHR37689">
    <property type="entry name" value="PROTEIN FDHE"/>
    <property type="match status" value="1"/>
</dbReference>
<dbReference type="PANTHER" id="PTHR37689:SF1">
    <property type="entry name" value="PROTEIN FDHE"/>
    <property type="match status" value="1"/>
</dbReference>
<dbReference type="Pfam" id="PF24860">
    <property type="entry name" value="FdhE_C"/>
    <property type="match status" value="1"/>
</dbReference>
<dbReference type="Pfam" id="PF24859">
    <property type="entry name" value="FdhE_central"/>
    <property type="match status" value="1"/>
</dbReference>
<dbReference type="Pfam" id="PF04216">
    <property type="entry name" value="FdhE_N"/>
    <property type="match status" value="1"/>
</dbReference>
<dbReference type="PIRSF" id="PIRSF018296">
    <property type="entry name" value="Format_dh_formtn"/>
    <property type="match status" value="1"/>
</dbReference>
<dbReference type="SUPFAM" id="SSF144020">
    <property type="entry name" value="FdhE-like"/>
    <property type="match status" value="1"/>
</dbReference>
<feature type="chain" id="PRO_1000056705" description="Protein FdhE homolog">
    <location>
        <begin position="1"/>
        <end position="302"/>
    </location>
</feature>
<gene>
    <name evidence="1" type="primary">fdhE</name>
    <name type="ordered locus">CGSHiEE_03270</name>
</gene>
<proteinExistence type="inferred from homology"/>
<sequence length="302" mass="34208">MSIKILSESEIKQVANSYQAPAVLFANPKNLYQRRAKRLRDLAQNHPLSDYLLFAADIVESQLSTLEKNPLPPQQLEQLNAIEPLNAKTFKRDSIWREYLTEILDEIKPKANEQIAATIEFLEKTSSAELEEMANKLLAQEFNLVSSDKAVFIWAALSLYWLQAAQQIPHNSQVENAENLHHCPVCGSLPVASIVQIGTSQGLRYLHCNLCESEWNLVRAQCTNCNSHDKLEMWSLDEELALVRAETCGSCESYLKMMFQEKDPYVEPVADDLASIFLDIEMEEKGFARSGLNPFIFPAEEA</sequence>
<organism>
    <name type="scientific">Haemophilus influenzae (strain PittEE)</name>
    <dbReference type="NCBI Taxonomy" id="374930"/>
    <lineage>
        <taxon>Bacteria</taxon>
        <taxon>Pseudomonadati</taxon>
        <taxon>Pseudomonadota</taxon>
        <taxon>Gammaproteobacteria</taxon>
        <taxon>Pasteurellales</taxon>
        <taxon>Pasteurellaceae</taxon>
        <taxon>Haemophilus</taxon>
    </lineage>
</organism>
<evidence type="ECO:0000255" key="1">
    <source>
        <dbReference type="HAMAP-Rule" id="MF_00611"/>
    </source>
</evidence>
<accession>A5UBC8</accession>